<keyword id="KW-0997">Cell inner membrane</keyword>
<keyword id="KW-1003">Cell membrane</keyword>
<keyword id="KW-0472">Membrane</keyword>
<keyword id="KW-0520">NAD</keyword>
<keyword id="KW-0874">Quinone</keyword>
<keyword id="KW-1278">Translocase</keyword>
<keyword id="KW-0812">Transmembrane</keyword>
<keyword id="KW-1133">Transmembrane helix</keyword>
<keyword id="KW-0813">Transport</keyword>
<keyword id="KW-0830">Ubiquinone</keyword>
<gene>
    <name evidence="1" type="primary">nuoK</name>
    <name type="ordered locus">FTF0041</name>
</gene>
<sequence>MRALKMNSISVSVTHGLIFSTLLFVISVAGIIINRRNILILLMSIELMLLAVNTNFLIFANMHQQAMGGVFVFFIMAVAAAETAIGLAIVVAIFRKRKTIDLSKLNTLRG</sequence>
<proteinExistence type="inferred from homology"/>
<comment type="function">
    <text evidence="1">NDH-1 shuttles electrons from NADH, via FMN and iron-sulfur (Fe-S) centers, to quinones in the respiratory chain. The immediate electron acceptor for the enzyme in this species is believed to be ubiquinone. Couples the redox reaction to proton translocation (for every two electrons transferred, four hydrogen ions are translocated across the cytoplasmic membrane), and thus conserves the redox energy in a proton gradient.</text>
</comment>
<comment type="catalytic activity">
    <reaction evidence="1">
        <text>a quinone + NADH + 5 H(+)(in) = a quinol + NAD(+) + 4 H(+)(out)</text>
        <dbReference type="Rhea" id="RHEA:57888"/>
        <dbReference type="ChEBI" id="CHEBI:15378"/>
        <dbReference type="ChEBI" id="CHEBI:24646"/>
        <dbReference type="ChEBI" id="CHEBI:57540"/>
        <dbReference type="ChEBI" id="CHEBI:57945"/>
        <dbReference type="ChEBI" id="CHEBI:132124"/>
    </reaction>
</comment>
<comment type="subunit">
    <text evidence="1">NDH-1 is composed of 14 different subunits. Subunits NuoA, H, J, K, L, M, N constitute the membrane sector of the complex.</text>
</comment>
<comment type="subcellular location">
    <subcellularLocation>
        <location evidence="1">Cell inner membrane</location>
        <topology evidence="1">Multi-pass membrane protein</topology>
    </subcellularLocation>
</comment>
<comment type="similarity">
    <text evidence="1">Belongs to the complex I subunit 4L family.</text>
</comment>
<feature type="chain" id="PRO_0000390068" description="NADH-quinone oxidoreductase subunit K">
    <location>
        <begin position="1"/>
        <end position="110"/>
    </location>
</feature>
<feature type="transmembrane region" description="Helical" evidence="1">
    <location>
        <begin position="13"/>
        <end position="33"/>
    </location>
</feature>
<feature type="transmembrane region" description="Helical" evidence="1">
    <location>
        <begin position="38"/>
        <end position="58"/>
    </location>
</feature>
<feature type="transmembrane region" description="Helical" evidence="1">
    <location>
        <begin position="70"/>
        <end position="90"/>
    </location>
</feature>
<reference key="1">
    <citation type="journal article" date="2007" name="PLoS ONE">
        <title>Genome sequencing shows that European isolates of Francisella tularensis subspecies tularensis are almost identical to US laboratory strain Schu S4.</title>
        <authorList>
            <person name="Chaudhuri R.R."/>
            <person name="Ren C.-P."/>
            <person name="Desmond L."/>
            <person name="Vincent G.A."/>
            <person name="Silman N.J."/>
            <person name="Brehm J.K."/>
            <person name="Elmore M.J."/>
            <person name="Hudson M.J."/>
            <person name="Forsman M."/>
            <person name="Isherwood K.E."/>
            <person name="Gurycova D."/>
            <person name="Minton N.P."/>
            <person name="Titball R.W."/>
            <person name="Pallen M.J."/>
            <person name="Vipond R."/>
        </authorList>
    </citation>
    <scope>NUCLEOTIDE SEQUENCE [LARGE SCALE GENOMIC DNA]</scope>
    <source>
        <strain>FSC 198</strain>
    </source>
</reference>
<organism>
    <name type="scientific">Francisella tularensis subsp. tularensis (strain FSC 198)</name>
    <dbReference type="NCBI Taxonomy" id="393115"/>
    <lineage>
        <taxon>Bacteria</taxon>
        <taxon>Pseudomonadati</taxon>
        <taxon>Pseudomonadota</taxon>
        <taxon>Gammaproteobacteria</taxon>
        <taxon>Thiotrichales</taxon>
        <taxon>Francisellaceae</taxon>
        <taxon>Francisella</taxon>
    </lineage>
</organism>
<protein>
    <recommendedName>
        <fullName evidence="1">NADH-quinone oxidoreductase subunit K</fullName>
        <ecNumber evidence="1">7.1.1.-</ecNumber>
    </recommendedName>
    <alternativeName>
        <fullName evidence="1">NADH dehydrogenase I subunit K</fullName>
    </alternativeName>
    <alternativeName>
        <fullName evidence="1">NDH-1 subunit K</fullName>
    </alternativeName>
</protein>
<evidence type="ECO:0000255" key="1">
    <source>
        <dbReference type="HAMAP-Rule" id="MF_01456"/>
    </source>
</evidence>
<accession>Q14K28</accession>
<dbReference type="EC" id="7.1.1.-" evidence="1"/>
<dbReference type="EMBL" id="AM286280">
    <property type="protein sequence ID" value="CAL08057.1"/>
    <property type="molecule type" value="Genomic_DNA"/>
</dbReference>
<dbReference type="RefSeq" id="WP_003022907.1">
    <property type="nucleotide sequence ID" value="NC_008245.1"/>
</dbReference>
<dbReference type="SMR" id="Q14K28"/>
<dbReference type="GeneID" id="75264599"/>
<dbReference type="KEGG" id="ftf:FTF0041"/>
<dbReference type="HOGENOM" id="CLU_144724_2_0_6"/>
<dbReference type="GO" id="GO:0030964">
    <property type="term" value="C:NADH dehydrogenase complex"/>
    <property type="evidence" value="ECO:0007669"/>
    <property type="project" value="TreeGrafter"/>
</dbReference>
<dbReference type="GO" id="GO:0005886">
    <property type="term" value="C:plasma membrane"/>
    <property type="evidence" value="ECO:0007669"/>
    <property type="project" value="UniProtKB-SubCell"/>
</dbReference>
<dbReference type="GO" id="GO:0050136">
    <property type="term" value="F:NADH:ubiquinone reductase (non-electrogenic) activity"/>
    <property type="evidence" value="ECO:0007669"/>
    <property type="project" value="UniProtKB-UniRule"/>
</dbReference>
<dbReference type="GO" id="GO:0048038">
    <property type="term" value="F:quinone binding"/>
    <property type="evidence" value="ECO:0007669"/>
    <property type="project" value="UniProtKB-KW"/>
</dbReference>
<dbReference type="GO" id="GO:0042773">
    <property type="term" value="P:ATP synthesis coupled electron transport"/>
    <property type="evidence" value="ECO:0007669"/>
    <property type="project" value="InterPro"/>
</dbReference>
<dbReference type="FunFam" id="1.10.287.3510:FF:000001">
    <property type="entry name" value="NADH-quinone oxidoreductase subunit K"/>
    <property type="match status" value="1"/>
</dbReference>
<dbReference type="Gene3D" id="1.10.287.3510">
    <property type="match status" value="1"/>
</dbReference>
<dbReference type="HAMAP" id="MF_01456">
    <property type="entry name" value="NDH1_NuoK"/>
    <property type="match status" value="1"/>
</dbReference>
<dbReference type="InterPro" id="IPR001133">
    <property type="entry name" value="NADH_UbQ_OxRdtase_chain4L/K"/>
</dbReference>
<dbReference type="InterPro" id="IPR039428">
    <property type="entry name" value="NUOK/Mnh_C1-like"/>
</dbReference>
<dbReference type="NCBIfam" id="NF004320">
    <property type="entry name" value="PRK05715.1-2"/>
    <property type="match status" value="1"/>
</dbReference>
<dbReference type="NCBIfam" id="NF004321">
    <property type="entry name" value="PRK05715.1-3"/>
    <property type="match status" value="1"/>
</dbReference>
<dbReference type="NCBIfam" id="NF004323">
    <property type="entry name" value="PRK05715.1-5"/>
    <property type="match status" value="1"/>
</dbReference>
<dbReference type="PANTHER" id="PTHR11434:SF16">
    <property type="entry name" value="NADH-UBIQUINONE OXIDOREDUCTASE CHAIN 4L"/>
    <property type="match status" value="1"/>
</dbReference>
<dbReference type="PANTHER" id="PTHR11434">
    <property type="entry name" value="NADH-UBIQUINONE OXIDOREDUCTASE SUBUNIT ND4L"/>
    <property type="match status" value="1"/>
</dbReference>
<dbReference type="Pfam" id="PF00420">
    <property type="entry name" value="Oxidored_q2"/>
    <property type="match status" value="1"/>
</dbReference>
<name>NUOK_FRAT1</name>